<evidence type="ECO:0000250" key="1">
    <source>
        <dbReference type="UniProtKB" id="P01762"/>
    </source>
</evidence>
<evidence type="ECO:0000250" key="2">
    <source>
        <dbReference type="UniProtKB" id="P23083"/>
    </source>
</evidence>
<evidence type="ECO:0000255" key="3"/>
<evidence type="ECO:0000255" key="4">
    <source>
        <dbReference type="PROSITE-ProRule" id="PRU00114"/>
    </source>
</evidence>
<evidence type="ECO:0000303" key="5">
    <source>
    </source>
</evidence>
<evidence type="ECO:0000303" key="6">
    <source>
    </source>
</evidence>
<evidence type="ECO:0000303" key="7">
    <source>
    </source>
</evidence>
<evidence type="ECO:0000303" key="8">
    <source>
    </source>
</evidence>
<evidence type="ECO:0000303" key="9">
    <source>
    </source>
</evidence>
<evidence type="ECO:0000303" key="10">
    <source ref="3"/>
</evidence>
<evidence type="ECO:0000305" key="11"/>
<evidence type="ECO:0000305" key="12">
    <source>
    </source>
</evidence>
<evidence type="ECO:0007829" key="13">
    <source>
        <dbReference type="PDB" id="7CZV"/>
    </source>
</evidence>
<reference key="1">
    <citation type="journal article" date="2013" name="Am. J. Hum. Genet.">
        <title>Complete haplotype sequence of the human immunoglobulin heavy-chain variable, diversity, and joining genes and characterization of allelic and copy-number variation.</title>
        <authorList>
            <person name="Watson C.T."/>
            <person name="Steinberg K.M."/>
            <person name="Huddleston J."/>
            <person name="Warren R.L."/>
            <person name="Malig M."/>
            <person name="Schein J."/>
            <person name="Willsey A.J."/>
            <person name="Joy J.B."/>
            <person name="Scott J.K."/>
            <person name="Graves T.A."/>
            <person name="Wilson R.K."/>
            <person name="Holt R.A."/>
            <person name="Eichler E.E."/>
            <person name="Breden F."/>
        </authorList>
    </citation>
    <scope>NUCLEOTIDE SEQUENCE [GENOMIC DNA] (IMGT ALLELE IGHV3-30-3*03)</scope>
</reference>
<reference key="2">
    <citation type="journal article" date="2001" name="Exp. Clin. Immunogenet.">
        <title>Nomenclature of the human immunoglobulin heavy (IGH) genes.</title>
        <authorList>
            <person name="Lefranc M.P."/>
        </authorList>
    </citation>
    <scope>NOMENCLATURE</scope>
</reference>
<reference key="3">
    <citation type="book" date="2001" name="The Immunoglobulin FactsBook.">
        <title>The Immunoglobulin FactsBook.</title>
        <editorList>
            <person name="Lefranc M.P."/>
            <person name="Lefranc G."/>
        </editorList>
        <authorList>
            <person name="Lefranc M.P."/>
            <person name="Lefranc G."/>
        </authorList>
    </citation>
    <scope>NOMENCLATURE</scope>
</reference>
<reference key="4">
    <citation type="journal article" date="2007" name="Annu. Rev. Genet.">
        <title>Immunoglobulin somatic hypermutation.</title>
        <authorList>
            <person name="Teng G."/>
            <person name="Papavasiliou F.N."/>
        </authorList>
    </citation>
    <scope>REVIEW ON SOMATIC HYPERMUTATION</scope>
</reference>
<reference key="5">
    <citation type="journal article" date="2010" name="J. Allergy Clin. Immunol.">
        <title>Structure and function of immunoglobulins.</title>
        <authorList>
            <person name="Schroeder H.W. Jr."/>
            <person name="Cavacini L."/>
        </authorList>
    </citation>
    <scope>REVIEW ON IMMUNOGLOBULINS</scope>
</reference>
<reference key="6">
    <citation type="journal article" date="2012" name="Nat. Rev. Immunol.">
        <title>Molecular programming of B cell memory.</title>
        <authorList>
            <person name="McHeyzer-Williams M."/>
            <person name="Okitsu S."/>
            <person name="Wang N."/>
            <person name="McHeyzer-Williams L."/>
        </authorList>
    </citation>
    <scope>REVIEW ON FUNCTION</scope>
</reference>
<reference key="7">
    <citation type="journal article" date="2014" name="Front. Immunol.">
        <title>Immunoglobulin and T Cell Receptor Genes: IMGT((R)) and the Birth and Rise of Immunoinformatics.</title>
        <authorList>
            <person name="Lefranc M.P."/>
        </authorList>
    </citation>
    <scope>NOMENCLATURE</scope>
</reference>
<accession>P0DP02</accession>
<proteinExistence type="evidence at protein level"/>
<sequence>MEFGLSWVFLVALLRGVQCQVQLVESGGGVVQPGRSLRLSCAASGFTFSSYAMHWVRQAPGKGLEWVAVISYDGSNKYYADSVKGRFTISRDNSKNTLYLQMNSLRAEDTAVYYCAR</sequence>
<keyword id="KW-0002">3D-structure</keyword>
<keyword id="KW-1064">Adaptive immunity</keyword>
<keyword id="KW-1003">Cell membrane</keyword>
<keyword id="KW-1015">Disulfide bond</keyword>
<keyword id="KW-0391">Immunity</keyword>
<keyword id="KW-1280">Immunoglobulin</keyword>
<keyword id="KW-0393">Immunoglobulin domain</keyword>
<keyword id="KW-0472">Membrane</keyword>
<keyword id="KW-0873">Pyrrolidone carboxylic acid</keyword>
<keyword id="KW-1185">Reference proteome</keyword>
<keyword id="KW-0964">Secreted</keyword>
<keyword id="KW-0732">Signal</keyword>
<feature type="signal peptide" evidence="3">
    <location>
        <begin position="1"/>
        <end position="19"/>
    </location>
</feature>
<feature type="chain" id="PRO_0000439565" description="Immunoglobulin heavy variable 3-30-3" evidence="3">
    <location>
        <begin position="20"/>
        <end position="117"/>
    </location>
</feature>
<feature type="domain" description="Ig-like" evidence="4">
    <location>
        <begin position="20"/>
        <end position="117" status="greater than"/>
    </location>
</feature>
<feature type="region of interest" description="Framework-1" evidence="2">
    <location>
        <begin position="20"/>
        <end position="44"/>
    </location>
</feature>
<feature type="region of interest" description="Complementarity-determining-1" evidence="2">
    <location>
        <begin position="45"/>
        <end position="52"/>
    </location>
</feature>
<feature type="region of interest" description="Framework-2" evidence="2">
    <location>
        <begin position="53"/>
        <end position="69"/>
    </location>
</feature>
<feature type="region of interest" description="Complementarity-determining-2" evidence="2">
    <location>
        <begin position="70"/>
        <end position="77"/>
    </location>
</feature>
<feature type="region of interest" description="Framework-3" evidence="2">
    <location>
        <begin position="78"/>
        <end position="115"/>
    </location>
</feature>
<feature type="region of interest" description="Complementarity-determining-3" evidence="2">
    <location>
        <begin position="116"/>
        <end position="117" status="greater than"/>
    </location>
</feature>
<feature type="modified residue" description="Pyrrolidone carboxylic acid" evidence="1">
    <location>
        <position position="20"/>
    </location>
</feature>
<feature type="disulfide bond" evidence="4">
    <location>
        <begin position="41"/>
        <end position="115"/>
    </location>
</feature>
<feature type="non-terminal residue">
    <location>
        <position position="117"/>
    </location>
</feature>
<feature type="strand" evidence="13">
    <location>
        <begin position="24"/>
        <end position="26"/>
    </location>
</feature>
<feature type="strand" evidence="13">
    <location>
        <begin position="40"/>
        <end position="42"/>
    </location>
</feature>
<feature type="turn" evidence="13">
    <location>
        <begin position="48"/>
        <end position="50"/>
    </location>
</feature>
<feature type="strand" evidence="13">
    <location>
        <begin position="51"/>
        <end position="58"/>
    </location>
</feature>
<feature type="strand" evidence="13">
    <location>
        <begin position="65"/>
        <end position="70"/>
    </location>
</feature>
<feature type="strand" evidence="13">
    <location>
        <begin position="72"/>
        <end position="74"/>
    </location>
</feature>
<feature type="turn" evidence="13">
    <location>
        <begin position="81"/>
        <end position="86"/>
    </location>
</feature>
<feature type="strand" evidence="13">
    <location>
        <begin position="87"/>
        <end position="92"/>
    </location>
</feature>
<feature type="turn" evidence="13">
    <location>
        <begin position="93"/>
        <end position="96"/>
    </location>
</feature>
<feature type="strand" evidence="13">
    <location>
        <begin position="97"/>
        <end position="102"/>
    </location>
</feature>
<feature type="strand" evidence="13">
    <location>
        <begin position="111"/>
        <end position="117"/>
    </location>
</feature>
<gene>
    <name evidence="5 10" type="primary">IGHV3-30-3</name>
</gene>
<name>HVC33_HUMAN</name>
<dbReference type="EMBL" id="KC713945">
    <property type="protein sequence ID" value="AGI96763.1"/>
    <property type="molecule type" value="Genomic_DNA"/>
</dbReference>
<dbReference type="PDB" id="7CZU">
    <property type="method" value="EM"/>
    <property type="resolution" value="3.40 A"/>
    <property type="chains" value="H/J=25-117"/>
</dbReference>
<dbReference type="PDB" id="7CZV">
    <property type="method" value="EM"/>
    <property type="resolution" value="3.30 A"/>
    <property type="chains" value="H/I/J=25-117"/>
</dbReference>
<dbReference type="PDBsum" id="7CZU"/>
<dbReference type="PDBsum" id="7CZV"/>
<dbReference type="SMR" id="P0DP02"/>
<dbReference type="FunCoup" id="P0DP02">
    <property type="interactions" value="351"/>
</dbReference>
<dbReference type="IMGT_GENE-DB" id="IGHV3-30-3"/>
<dbReference type="BioMuta" id="HGNC:5593"/>
<dbReference type="jPOST" id="P0DP02"/>
<dbReference type="MassIVE" id="P0DP02"/>
<dbReference type="PeptideAtlas" id="P0DP02"/>
<dbReference type="Pumba" id="P0DP02"/>
<dbReference type="AGR" id="HGNC:5593"/>
<dbReference type="GeneCards" id="IGHV3-30-3"/>
<dbReference type="HGNC" id="HGNC:5593">
    <property type="gene designation" value="IGHV3-30-3"/>
</dbReference>
<dbReference type="neXtProt" id="NX_P0DP02"/>
<dbReference type="InParanoid" id="P0DP02"/>
<dbReference type="PAN-GO" id="P0DP02">
    <property type="GO annotations" value="11 GO annotations based on evolutionary models"/>
</dbReference>
<dbReference type="Pharos" id="P0DP02">
    <property type="development level" value="Tdark"/>
</dbReference>
<dbReference type="PRO" id="PR:P0DP02"/>
<dbReference type="Proteomes" id="UP000005640">
    <property type="component" value="Unplaced"/>
</dbReference>
<dbReference type="RNAct" id="P0DP02">
    <property type="molecule type" value="protein"/>
</dbReference>
<dbReference type="GO" id="GO:0005576">
    <property type="term" value="C:extracellular region"/>
    <property type="evidence" value="ECO:0007669"/>
    <property type="project" value="UniProtKB-SubCell"/>
</dbReference>
<dbReference type="GO" id="GO:0019814">
    <property type="term" value="C:immunoglobulin complex"/>
    <property type="evidence" value="ECO:0007669"/>
    <property type="project" value="UniProtKB-KW"/>
</dbReference>
<dbReference type="GO" id="GO:0005886">
    <property type="term" value="C:plasma membrane"/>
    <property type="evidence" value="ECO:0007669"/>
    <property type="project" value="UniProtKB-SubCell"/>
</dbReference>
<dbReference type="GO" id="GO:0003823">
    <property type="term" value="F:antigen binding"/>
    <property type="evidence" value="ECO:0000318"/>
    <property type="project" value="GO_Central"/>
</dbReference>
<dbReference type="GO" id="GO:0016064">
    <property type="term" value="P:immunoglobulin mediated immune response"/>
    <property type="evidence" value="ECO:0000318"/>
    <property type="project" value="GO_Central"/>
</dbReference>
<dbReference type="CDD" id="cd04981">
    <property type="entry name" value="IgV_H"/>
    <property type="match status" value="1"/>
</dbReference>
<dbReference type="FunFam" id="2.60.40.10:FF:000942">
    <property type="entry name" value="Immunoglobulin heavy variable 3-23"/>
    <property type="match status" value="1"/>
</dbReference>
<dbReference type="Gene3D" id="2.60.40.10">
    <property type="entry name" value="Immunoglobulins"/>
    <property type="match status" value="1"/>
</dbReference>
<dbReference type="InterPro" id="IPR007110">
    <property type="entry name" value="Ig-like_dom"/>
</dbReference>
<dbReference type="InterPro" id="IPR036179">
    <property type="entry name" value="Ig-like_dom_sf"/>
</dbReference>
<dbReference type="InterPro" id="IPR013783">
    <property type="entry name" value="Ig-like_fold"/>
</dbReference>
<dbReference type="InterPro" id="IPR013106">
    <property type="entry name" value="Ig_V-set"/>
</dbReference>
<dbReference type="InterPro" id="IPR050199">
    <property type="entry name" value="IgHV"/>
</dbReference>
<dbReference type="PANTHER" id="PTHR23266">
    <property type="entry name" value="IMMUNOGLOBULIN HEAVY CHAIN"/>
    <property type="match status" value="1"/>
</dbReference>
<dbReference type="Pfam" id="PF07686">
    <property type="entry name" value="V-set"/>
    <property type="match status" value="1"/>
</dbReference>
<dbReference type="SMART" id="SM00406">
    <property type="entry name" value="IGv"/>
    <property type="match status" value="1"/>
</dbReference>
<dbReference type="SUPFAM" id="SSF48726">
    <property type="entry name" value="Immunoglobulin"/>
    <property type="match status" value="1"/>
</dbReference>
<dbReference type="PROSITE" id="PS50835">
    <property type="entry name" value="IG_LIKE"/>
    <property type="match status" value="1"/>
</dbReference>
<protein>
    <recommendedName>
        <fullName evidence="5 10">Immunoglobulin heavy variable 3-30-3</fullName>
    </recommendedName>
</protein>
<comment type="function">
    <text evidence="6 7 8 9">V region of the variable domain of immunoglobulin heavy chains that participates in the antigen recognition (PubMed:24600447). Immunoglobulins, also known as antibodies, are membrane-bound or secreted glycoproteins produced by B lymphocytes. In the recognition phase of humoral immunity, the membrane-bound immunoglobulins serve as receptors which, upon binding of a specific antigen, trigger the clonal expansion and differentiation of B lymphocytes into immunoglobulins-secreting plasma cells. Secreted immunoglobulins mediate the effector phase of humoral immunity, which results in the elimination of bound antigens (PubMed:20176268, PubMed:22158414). The antigen binding site is formed by the variable domain of one heavy chain, together with that of its associated light chain. Thus, each immunoglobulin has two antigen binding sites with remarkable affinity for a particular antigen. The variable domains are assembled by a process called V-(D)-J rearrangement and can then be subjected to somatic hypermutations which, after exposure to antigen and selection, allow affinity maturation for a particular antigen (PubMed:17576170, PubMed:20176268).</text>
</comment>
<comment type="subunit">
    <text evidence="7">Immunoglobulins are composed of two identical heavy chains and two identical light chains; disulfide-linked.</text>
</comment>
<comment type="subcellular location">
    <subcellularLocation>
        <location evidence="7 8">Secreted</location>
    </subcellularLocation>
    <subcellularLocation>
        <location evidence="7 8">Cell membrane</location>
    </subcellularLocation>
</comment>
<comment type="polymorphism">
    <text evidence="11">There are several alleles. The sequence shown is that of IMGT allele IGHV3-30-3*03.</text>
</comment>
<comment type="caution">
    <text evidence="11">For examples of full-length immunoglobulin heavy chains (of different isotypes) see AC P0DOX2, AC P0DOX3, AC P0DOX4, AC P0DOX5 and AC P0DOX6.</text>
</comment>
<comment type="caution">
    <text evidence="12">Watson et al. identified this gene on chromosome 14. However, it is not currently present on the reference genome assembly (GRCh38/hg38).</text>
</comment>
<organism>
    <name type="scientific">Homo sapiens</name>
    <name type="common">Human</name>
    <dbReference type="NCBI Taxonomy" id="9606"/>
    <lineage>
        <taxon>Eukaryota</taxon>
        <taxon>Metazoa</taxon>
        <taxon>Chordata</taxon>
        <taxon>Craniata</taxon>
        <taxon>Vertebrata</taxon>
        <taxon>Euteleostomi</taxon>
        <taxon>Mammalia</taxon>
        <taxon>Eutheria</taxon>
        <taxon>Euarchontoglires</taxon>
        <taxon>Primates</taxon>
        <taxon>Haplorrhini</taxon>
        <taxon>Catarrhini</taxon>
        <taxon>Hominidae</taxon>
        <taxon>Homo</taxon>
    </lineage>
</organism>